<sequence>MPERDSEPFSNPLAPDGHDVDDPHSFHQSKLTNEDFRKLLMTPRAAPTSAPPSKSRHHEMPREYNEDEDPAARRRKKKSYYAKLRQQEIERERELAEKYRDRAKERRDGVNKDYEETELISTTANYRAVGPTAEADKSAAEKRRQLIQESKFLGGDMEHTHLVKGLDFALLQKVRAEIASKEKEEEELMEKPQKETKKDEDPENKIEFKTRLGRNVYRMLFKSKAYERNELFLPGRMAYVVDLDDEYADTDIPTTLIRSKADCPTMEAQTTLTTNDIVISKLTQILSYLRQGTRNKKLKKKDKGKLEEKKPPEADMNIFEDIGDYVPSTTKTPRDKERERYRERERDRERDRDRDRERERERDRERERERDREREEEKKRHSYFEKPKVDDEPIDVDKGPGSAKELIKSINEKFAGSAGWEGTESLKKPEDKKQLGDFFGMSNSYAECYPATMDDMAVDSDEEVDYSKMDQGNKKGPLGRWDFDTQEEYSEYMNNKEALPKAAFQYGIKMSEGRKTRRFKETNDKAELDRQWKKISAIIEKRKKMEADGVEVKRPKY</sequence>
<comment type="function">
    <text evidence="1">Involved in pre-mRNA splicing as a component of the spliceosome. Auxiliary spliceosomal protein that regulates selection of alternative splice sites in a small set of target pre-mRNA species. Required for normal mitotic cell cycle progression. Recruits MAD1L1 and MAD2L1 to kinetochores, and is required to trigger the spindle assembly checkpoint. Required for normal accumulation of SMU1.</text>
</comment>
<comment type="subunit">
    <text evidence="1">Component of the spliceosome B complex. Interacts with SMU1. Interacts with MAD1L1. May interact with DHX15.</text>
</comment>
<comment type="subcellular location">
    <subcellularLocation>
        <location evidence="1">Nucleus</location>
    </subcellularLocation>
    <subcellularLocation>
        <location evidence="1">Nucleus</location>
        <location evidence="1">Nucleoplasm</location>
    </subcellularLocation>
    <subcellularLocation>
        <location evidence="1">Chromosome</location>
    </subcellularLocation>
    <subcellularLocation>
        <location evidence="1">Cytoplasm</location>
        <location evidence="1">Cytoskeleton</location>
        <location evidence="1">Spindle pole</location>
    </subcellularLocation>
    <text evidence="1">Predominantly present throughout the nucleoplasm during prometaphase, metaphase and anaphase. Is also detected in nuclear foci that are not identical with Cajal bodies. Starts to accumulate at chromosomes during telophase, and is nearly exclusively associated with chromosomes in newly divided cells. Colocalizes with MAD1L1 at mitotic spindle poles during metaphase and anaphase.</text>
</comment>
<comment type="similarity">
    <text evidence="4">Belongs to the RED family.</text>
</comment>
<proteinExistence type="evidence at transcript level"/>
<dbReference type="EMBL" id="CR926048">
    <property type="protein sequence ID" value="CAI29680.1"/>
    <property type="molecule type" value="mRNA"/>
</dbReference>
<dbReference type="RefSeq" id="NP_001126465.1">
    <property type="nucleotide sequence ID" value="NM_001132993.1"/>
</dbReference>
<dbReference type="SMR" id="Q5NVI3"/>
<dbReference type="FunCoup" id="Q5NVI3">
    <property type="interactions" value="2906"/>
</dbReference>
<dbReference type="STRING" id="9601.ENSPPYP00000017737"/>
<dbReference type="Ensembl" id="ENSPPYT00000018450.2">
    <property type="protein sequence ID" value="ENSPPYP00000017737.2"/>
    <property type="gene ID" value="ENSPPYG00000015861.2"/>
</dbReference>
<dbReference type="GeneID" id="100173452"/>
<dbReference type="KEGG" id="pon:100173452"/>
<dbReference type="CTD" id="3550"/>
<dbReference type="eggNOG" id="KOG2498">
    <property type="taxonomic scope" value="Eukaryota"/>
</dbReference>
<dbReference type="GeneTree" id="ENSGT00940000153727"/>
<dbReference type="InParanoid" id="Q5NVI3"/>
<dbReference type="OMA" id="WQQTNGY"/>
<dbReference type="OrthoDB" id="3366823at2759"/>
<dbReference type="Proteomes" id="UP000001595">
    <property type="component" value="Chromosome 5"/>
</dbReference>
<dbReference type="GO" id="GO:0005737">
    <property type="term" value="C:cytoplasm"/>
    <property type="evidence" value="ECO:0007669"/>
    <property type="project" value="UniProtKB-KW"/>
</dbReference>
<dbReference type="GO" id="GO:0097431">
    <property type="term" value="C:mitotic spindle pole"/>
    <property type="evidence" value="ECO:0007669"/>
    <property type="project" value="Ensembl"/>
</dbReference>
<dbReference type="GO" id="GO:0000228">
    <property type="term" value="C:nuclear chromosome"/>
    <property type="evidence" value="ECO:0007669"/>
    <property type="project" value="Ensembl"/>
</dbReference>
<dbReference type="GO" id="GO:0016607">
    <property type="term" value="C:nuclear speck"/>
    <property type="evidence" value="ECO:0007669"/>
    <property type="project" value="Ensembl"/>
</dbReference>
<dbReference type="GO" id="GO:0005654">
    <property type="term" value="C:nucleoplasm"/>
    <property type="evidence" value="ECO:0000250"/>
    <property type="project" value="UniProtKB"/>
</dbReference>
<dbReference type="GO" id="GO:0005634">
    <property type="term" value="C:nucleus"/>
    <property type="evidence" value="ECO:0000250"/>
    <property type="project" value="UniProtKB"/>
</dbReference>
<dbReference type="GO" id="GO:0071005">
    <property type="term" value="C:U2-type precatalytic spliceosome"/>
    <property type="evidence" value="ECO:0000250"/>
    <property type="project" value="UniProtKB"/>
</dbReference>
<dbReference type="GO" id="GO:0042802">
    <property type="term" value="F:identical protein binding"/>
    <property type="evidence" value="ECO:0007669"/>
    <property type="project" value="Ensembl"/>
</dbReference>
<dbReference type="GO" id="GO:0000278">
    <property type="term" value="P:mitotic cell cycle"/>
    <property type="evidence" value="ECO:0000250"/>
    <property type="project" value="UniProtKB"/>
</dbReference>
<dbReference type="GO" id="GO:0007094">
    <property type="term" value="P:mitotic spindle assembly checkpoint signaling"/>
    <property type="evidence" value="ECO:0000250"/>
    <property type="project" value="UniProtKB"/>
</dbReference>
<dbReference type="GO" id="GO:0000398">
    <property type="term" value="P:mRNA splicing, via spliceosome"/>
    <property type="evidence" value="ECO:0000250"/>
    <property type="project" value="UniProtKB"/>
</dbReference>
<dbReference type="GO" id="GO:0034501">
    <property type="term" value="P:protein localization to kinetochore"/>
    <property type="evidence" value="ECO:0000250"/>
    <property type="project" value="UniProtKB"/>
</dbReference>
<dbReference type="InterPro" id="IPR039896">
    <property type="entry name" value="Red-like"/>
</dbReference>
<dbReference type="InterPro" id="IPR012492">
    <property type="entry name" value="RED_C"/>
</dbReference>
<dbReference type="InterPro" id="IPR012916">
    <property type="entry name" value="RED_N"/>
</dbReference>
<dbReference type="PANTHER" id="PTHR12765">
    <property type="entry name" value="RED PROTEIN IK FACTOR CYTOKINE IK"/>
    <property type="match status" value="1"/>
</dbReference>
<dbReference type="Pfam" id="PF07807">
    <property type="entry name" value="RED_C"/>
    <property type="match status" value="1"/>
</dbReference>
<dbReference type="Pfam" id="PF07808">
    <property type="entry name" value="RED_N"/>
    <property type="match status" value="1"/>
</dbReference>
<feature type="chain" id="PRO_0000288498" description="Protein Red">
    <location>
        <begin position="1"/>
        <end position="557"/>
    </location>
</feature>
<feature type="repeat" description="1">
    <location>
        <begin position="342"/>
        <end position="343"/>
    </location>
</feature>
<feature type="repeat" description="2">
    <location>
        <begin position="344"/>
        <end position="345"/>
    </location>
</feature>
<feature type="repeat" description="3">
    <location>
        <begin position="346"/>
        <end position="347"/>
    </location>
</feature>
<feature type="repeat" description="4">
    <location>
        <begin position="348"/>
        <end position="349"/>
    </location>
</feature>
<feature type="repeat" description="5">
    <location>
        <begin position="350"/>
        <end position="351"/>
    </location>
</feature>
<feature type="repeat" description="6">
    <location>
        <begin position="352"/>
        <end position="353"/>
    </location>
</feature>
<feature type="repeat" description="7">
    <location>
        <begin position="354"/>
        <end position="355"/>
    </location>
</feature>
<feature type="repeat" description="8">
    <location>
        <begin position="356"/>
        <end position="357"/>
    </location>
</feature>
<feature type="repeat" description="9">
    <location>
        <begin position="358"/>
        <end position="359"/>
    </location>
</feature>
<feature type="repeat" description="10">
    <location>
        <begin position="360"/>
        <end position="361"/>
    </location>
</feature>
<feature type="repeat" description="11">
    <location>
        <begin position="362"/>
        <end position="363"/>
    </location>
</feature>
<feature type="repeat" description="12">
    <location>
        <begin position="364"/>
        <end position="365"/>
    </location>
</feature>
<feature type="repeat" description="13">
    <location>
        <begin position="366"/>
        <end position="367"/>
    </location>
</feature>
<feature type="repeat" description="14">
    <location>
        <begin position="368"/>
        <end position="369"/>
    </location>
</feature>
<feature type="repeat" description="15">
    <location>
        <begin position="370"/>
        <end position="371"/>
    </location>
</feature>
<feature type="repeat" description="16">
    <location>
        <begin position="372"/>
        <end position="373"/>
    </location>
</feature>
<feature type="repeat" description="17">
    <location>
        <begin position="374"/>
        <end position="375"/>
    </location>
</feature>
<feature type="region of interest" description="Disordered" evidence="3">
    <location>
        <begin position="1"/>
        <end position="84"/>
    </location>
</feature>
<feature type="region of interest" description="Disordered" evidence="3">
    <location>
        <begin position="181"/>
        <end position="205"/>
    </location>
</feature>
<feature type="region of interest" description="Disordered" evidence="3">
    <location>
        <begin position="294"/>
        <end position="402"/>
    </location>
</feature>
<feature type="region of interest" description="17 X 2 AA tandem repeats of R-[ED]">
    <location>
        <begin position="342"/>
        <end position="375"/>
    </location>
</feature>
<feature type="compositionally biased region" description="Basic and acidic residues" evidence="3">
    <location>
        <begin position="16"/>
        <end position="25"/>
    </location>
</feature>
<feature type="compositionally biased region" description="Low complexity" evidence="3">
    <location>
        <begin position="42"/>
        <end position="53"/>
    </location>
</feature>
<feature type="compositionally biased region" description="Basic residues" evidence="3">
    <location>
        <begin position="294"/>
        <end position="303"/>
    </location>
</feature>
<feature type="compositionally biased region" description="Basic and acidic residues" evidence="3">
    <location>
        <begin position="304"/>
        <end position="313"/>
    </location>
</feature>
<feature type="compositionally biased region" description="Basic and acidic residues" evidence="3">
    <location>
        <begin position="332"/>
        <end position="398"/>
    </location>
</feature>
<feature type="modified residue" description="N6-acetyllysine" evidence="1">
    <location>
        <position position="98"/>
    </location>
</feature>
<feature type="modified residue" description="N6-acetyllysine" evidence="2">
    <location>
        <position position="137"/>
    </location>
</feature>
<feature type="modified residue" description="Phosphoserine" evidence="1">
    <location>
        <position position="287"/>
    </location>
</feature>
<feature type="modified residue" description="Phosphoserine" evidence="1">
    <location>
        <position position="417"/>
    </location>
</feature>
<feature type="modified residue" description="Phosphoserine" evidence="1">
    <location>
        <position position="460"/>
    </location>
</feature>
<feature type="modified residue" description="Phosphothreonine" evidence="1">
    <location>
        <position position="485"/>
    </location>
</feature>
<feature type="modified residue" description="Phosphoserine" evidence="1">
    <location>
        <position position="536"/>
    </location>
</feature>
<feature type="cross-link" description="Glycyl lysine isopeptide (Lys-Gly) (interchain with G-Cter in SUMO2)" evidence="1">
    <location>
        <position position="151"/>
    </location>
</feature>
<feature type="cross-link" description="Glycyl lysine isopeptide (Lys-Gly) (interchain with G-Cter in SUMO2)" evidence="1">
    <location>
        <position position="310"/>
    </location>
</feature>
<feature type="cross-link" description="Glycyl lysine isopeptide (Lys-Gly) (interchain with G-Cter in SUMO2)" evidence="1">
    <location>
        <position position="331"/>
    </location>
</feature>
<feature type="cross-link" description="Glycyl lysine isopeptide (Lys-Gly) (interchain with G-Cter in SUMO2)" evidence="1">
    <location>
        <position position="386"/>
    </location>
</feature>
<feature type="cross-link" description="Glycyl lysine isopeptide (Lys-Gly) (interchain with G-Cter in SUMO2)" evidence="1">
    <location>
        <position position="388"/>
    </location>
</feature>
<feature type="cross-link" description="Glycyl lysine isopeptide (Lys-Gly) (interchain with G-Cter in SUMO2)" evidence="1">
    <location>
        <position position="404"/>
    </location>
</feature>
<feature type="cross-link" description="Glycyl lysine isopeptide (Lys-Gly) (interchain with G-Cter in SUMO2)" evidence="1">
    <location>
        <position position="408"/>
    </location>
</feature>
<feature type="cross-link" description="Glycyl lysine isopeptide (Lys-Gly) (interchain with G-Cter in SUMO2)" evidence="1">
    <location>
        <position position="496"/>
    </location>
</feature>
<feature type="cross-link" description="Glycyl lysine isopeptide (Lys-Gly) (interchain with G-Cter in SUMO2)" evidence="1">
    <location>
        <position position="501"/>
    </location>
</feature>
<feature type="cross-link" description="Glycyl lysine isopeptide (Lys-Gly) (interchain with G-Cter in SUMO2)" evidence="1">
    <location>
        <position position="509"/>
    </location>
</feature>
<feature type="cross-link" description="Glycyl lysine isopeptide (Lys-Gly) (interchain with G-Cter in SUMO2)" evidence="1">
    <location>
        <position position="541"/>
    </location>
</feature>
<feature type="cross-link" description="Glycyl lysine isopeptide (Lys-Gly) (interchain with G-Cter in SUMO2)" evidence="1">
    <location>
        <position position="543"/>
    </location>
</feature>
<feature type="cross-link" description="Glycyl lysine isopeptide (Lys-Gly) (interchain with G-Cter in SUMO2)" evidence="1">
    <location>
        <position position="544"/>
    </location>
</feature>
<feature type="cross-link" description="Glycyl lysine isopeptide (Lys-Gly) (interchain with G-Cter in SUMO2)" evidence="1">
    <location>
        <position position="553"/>
    </location>
</feature>
<protein>
    <recommendedName>
        <fullName>Protein Red</fullName>
    </recommendedName>
    <alternativeName>
        <fullName>Cytokine IK</fullName>
    </alternativeName>
    <alternativeName>
        <fullName>IK factor</fullName>
    </alternativeName>
</protein>
<name>RED_PONAB</name>
<evidence type="ECO:0000250" key="1">
    <source>
        <dbReference type="UniProtKB" id="Q13123"/>
    </source>
</evidence>
<evidence type="ECO:0000250" key="2">
    <source>
        <dbReference type="UniProtKB" id="Q9Z1M8"/>
    </source>
</evidence>
<evidence type="ECO:0000256" key="3">
    <source>
        <dbReference type="SAM" id="MobiDB-lite"/>
    </source>
</evidence>
<evidence type="ECO:0000305" key="4"/>
<accession>Q5NVI3</accession>
<keyword id="KW-0007">Acetylation</keyword>
<keyword id="KW-0158">Chromosome</keyword>
<keyword id="KW-0963">Cytoplasm</keyword>
<keyword id="KW-0206">Cytoskeleton</keyword>
<keyword id="KW-1017">Isopeptide bond</keyword>
<keyword id="KW-0507">mRNA processing</keyword>
<keyword id="KW-0508">mRNA splicing</keyword>
<keyword id="KW-0539">Nucleus</keyword>
<keyword id="KW-0597">Phosphoprotein</keyword>
<keyword id="KW-1185">Reference proteome</keyword>
<keyword id="KW-0677">Repeat</keyword>
<keyword id="KW-0747">Spliceosome</keyword>
<keyword id="KW-0832">Ubl conjugation</keyword>
<gene>
    <name type="primary">IK</name>
</gene>
<reference key="1">
    <citation type="submission" date="2004-11" db="EMBL/GenBank/DDBJ databases">
        <authorList>
            <consortium name="The German cDNA consortium"/>
        </authorList>
    </citation>
    <scope>NUCLEOTIDE SEQUENCE [LARGE SCALE MRNA]</scope>
    <source>
        <tissue>Brain cortex</tissue>
    </source>
</reference>
<organism>
    <name type="scientific">Pongo abelii</name>
    <name type="common">Sumatran orangutan</name>
    <name type="synonym">Pongo pygmaeus abelii</name>
    <dbReference type="NCBI Taxonomy" id="9601"/>
    <lineage>
        <taxon>Eukaryota</taxon>
        <taxon>Metazoa</taxon>
        <taxon>Chordata</taxon>
        <taxon>Craniata</taxon>
        <taxon>Vertebrata</taxon>
        <taxon>Euteleostomi</taxon>
        <taxon>Mammalia</taxon>
        <taxon>Eutheria</taxon>
        <taxon>Euarchontoglires</taxon>
        <taxon>Primates</taxon>
        <taxon>Haplorrhini</taxon>
        <taxon>Catarrhini</taxon>
        <taxon>Hominidae</taxon>
        <taxon>Pongo</taxon>
    </lineage>
</organism>